<keyword id="KW-0963">Cytoplasm</keyword>
<keyword id="KW-0274">FAD</keyword>
<keyword id="KW-0285">Flavoprotein</keyword>
<keyword id="KW-0520">NAD</keyword>
<keyword id="KW-0819">tRNA processing</keyword>
<sequence length="629" mass="69521">MFYPDPFDVIIIGGGHAGTEAAMAAARMGQQTLLLTHNIDTLGQMSCNPAIGGIGKGHLVKEVDALGGLMAKAIDQAGIQFRILNASKGPAVRATRAQADRVLYRQAVRTALENQPNLMIFQQAVEDLIVENDRVVGAVTQMGLKFRAKAVVLTVGTFLDGKIHIGLDNYSGGRAGDPPSIPLSRRLRELPLRVGRLKTGTPPRIDARTIDFSVLAQQHGDNPMPVFSFMGNASQHPQQVPCYITHTNEKTHDVIRSNLDRSPMYAGVIEGVGPRYCPSIEDKVMRFADRNQHQIFLEPEGLTSNEIYPNGISTSLPFDVQMQIVRSMQGMENAKIVRPGYAIEYDFFDPRDLKPTLESKFIQGLFFAGQINGTTGYEEAAAQGLLAGLNAARLSADKEGWAPARSQAYLGVLVDDLCTLGTKEPYRMFTSRAEYRLMLREDNADLRLTEIGRELGLVDDERWARFNEKLENIERERQRLKSTWVTPSAEAAAEVNAHLTAPLSREASGEDLLRRPEMTYEKLTTLTPFAPALTDEQAAEQVEIQVKYEGYIARQQDEIEKQLRNENTLLPATLDYRQVSGLSNEVIAKLNDHKPASIGQASRISGVTPAAISILLVWLKKQGMLRRSA</sequence>
<accession>A8A6K4</accession>
<protein>
    <recommendedName>
        <fullName evidence="1">tRNA uridine 5-carboxymethylaminomethyl modification enzyme MnmG</fullName>
    </recommendedName>
    <alternativeName>
        <fullName evidence="1">Glucose-inhibited division protein A</fullName>
    </alternativeName>
</protein>
<evidence type="ECO:0000255" key="1">
    <source>
        <dbReference type="HAMAP-Rule" id="MF_00129"/>
    </source>
</evidence>
<feature type="chain" id="PRO_1000057842" description="tRNA uridine 5-carboxymethylaminomethyl modification enzyme MnmG">
    <location>
        <begin position="1"/>
        <end position="629"/>
    </location>
</feature>
<feature type="binding site" evidence="1">
    <location>
        <begin position="13"/>
        <end position="18"/>
    </location>
    <ligand>
        <name>FAD</name>
        <dbReference type="ChEBI" id="CHEBI:57692"/>
    </ligand>
</feature>
<feature type="binding site" evidence="1">
    <location>
        <position position="125"/>
    </location>
    <ligand>
        <name>FAD</name>
        <dbReference type="ChEBI" id="CHEBI:57692"/>
    </ligand>
</feature>
<feature type="binding site" evidence="1">
    <location>
        <position position="180"/>
    </location>
    <ligand>
        <name>FAD</name>
        <dbReference type="ChEBI" id="CHEBI:57692"/>
    </ligand>
</feature>
<feature type="binding site" evidence="1">
    <location>
        <begin position="273"/>
        <end position="287"/>
    </location>
    <ligand>
        <name>NAD(+)</name>
        <dbReference type="ChEBI" id="CHEBI:57540"/>
    </ligand>
</feature>
<feature type="binding site" evidence="1">
    <location>
        <position position="370"/>
    </location>
    <ligand>
        <name>FAD</name>
        <dbReference type="ChEBI" id="CHEBI:57692"/>
    </ligand>
</feature>
<organism>
    <name type="scientific">Escherichia coli O9:H4 (strain HS)</name>
    <dbReference type="NCBI Taxonomy" id="331112"/>
    <lineage>
        <taxon>Bacteria</taxon>
        <taxon>Pseudomonadati</taxon>
        <taxon>Pseudomonadota</taxon>
        <taxon>Gammaproteobacteria</taxon>
        <taxon>Enterobacterales</taxon>
        <taxon>Enterobacteriaceae</taxon>
        <taxon>Escherichia</taxon>
    </lineage>
</organism>
<gene>
    <name evidence="1" type="primary">mnmG</name>
    <name evidence="1" type="synonym">gidA</name>
    <name type="ordered locus">EcHS_A3957</name>
</gene>
<proteinExistence type="inferred from homology"/>
<dbReference type="EMBL" id="CP000802">
    <property type="protein sequence ID" value="ABV08158.1"/>
    <property type="molecule type" value="Genomic_DNA"/>
</dbReference>
<dbReference type="RefSeq" id="WP_000499788.1">
    <property type="nucleotide sequence ID" value="NC_009800.1"/>
</dbReference>
<dbReference type="SMR" id="A8A6K4"/>
<dbReference type="GeneID" id="75205459"/>
<dbReference type="KEGG" id="ecx:EcHS_A3957"/>
<dbReference type="HOGENOM" id="CLU_007831_2_2_6"/>
<dbReference type="GO" id="GO:0005829">
    <property type="term" value="C:cytosol"/>
    <property type="evidence" value="ECO:0007669"/>
    <property type="project" value="TreeGrafter"/>
</dbReference>
<dbReference type="GO" id="GO:0050660">
    <property type="term" value="F:flavin adenine dinucleotide binding"/>
    <property type="evidence" value="ECO:0007669"/>
    <property type="project" value="UniProtKB-UniRule"/>
</dbReference>
<dbReference type="GO" id="GO:0030488">
    <property type="term" value="P:tRNA methylation"/>
    <property type="evidence" value="ECO:0007669"/>
    <property type="project" value="TreeGrafter"/>
</dbReference>
<dbReference type="GO" id="GO:0002098">
    <property type="term" value="P:tRNA wobble uridine modification"/>
    <property type="evidence" value="ECO:0007669"/>
    <property type="project" value="InterPro"/>
</dbReference>
<dbReference type="FunFam" id="1.10.10.1800:FF:000001">
    <property type="entry name" value="tRNA uridine 5-carboxymethylaminomethyl modification enzyme MnmG"/>
    <property type="match status" value="1"/>
</dbReference>
<dbReference type="FunFam" id="1.10.150.570:FF:000001">
    <property type="entry name" value="tRNA uridine 5-carboxymethylaminomethyl modification enzyme MnmG"/>
    <property type="match status" value="1"/>
</dbReference>
<dbReference type="FunFam" id="3.50.50.60:FF:000002">
    <property type="entry name" value="tRNA uridine 5-carboxymethylaminomethyl modification enzyme MnmG"/>
    <property type="match status" value="1"/>
</dbReference>
<dbReference type="FunFam" id="3.50.50.60:FF:000010">
    <property type="entry name" value="tRNA uridine 5-carboxymethylaminomethyl modification enzyme MnmG"/>
    <property type="match status" value="1"/>
</dbReference>
<dbReference type="Gene3D" id="3.50.50.60">
    <property type="entry name" value="FAD/NAD(P)-binding domain"/>
    <property type="match status" value="2"/>
</dbReference>
<dbReference type="Gene3D" id="1.10.150.570">
    <property type="entry name" value="GidA associated domain, C-terminal subdomain"/>
    <property type="match status" value="1"/>
</dbReference>
<dbReference type="Gene3D" id="1.10.10.1800">
    <property type="entry name" value="tRNA uridine 5-carboxymethylaminomethyl modification enzyme MnmG/GidA"/>
    <property type="match status" value="1"/>
</dbReference>
<dbReference type="HAMAP" id="MF_00129">
    <property type="entry name" value="MnmG_GidA"/>
    <property type="match status" value="1"/>
</dbReference>
<dbReference type="InterPro" id="IPR036188">
    <property type="entry name" value="FAD/NAD-bd_sf"/>
</dbReference>
<dbReference type="InterPro" id="IPR049312">
    <property type="entry name" value="GIDA_C_N"/>
</dbReference>
<dbReference type="InterPro" id="IPR004416">
    <property type="entry name" value="MnmG"/>
</dbReference>
<dbReference type="InterPro" id="IPR002218">
    <property type="entry name" value="MnmG-rel"/>
</dbReference>
<dbReference type="InterPro" id="IPR020595">
    <property type="entry name" value="MnmG-rel_CS"/>
</dbReference>
<dbReference type="InterPro" id="IPR026904">
    <property type="entry name" value="MnmG_C"/>
</dbReference>
<dbReference type="InterPro" id="IPR047001">
    <property type="entry name" value="MnmG_C_subdom"/>
</dbReference>
<dbReference type="InterPro" id="IPR044920">
    <property type="entry name" value="MnmG_C_subdom_sf"/>
</dbReference>
<dbReference type="InterPro" id="IPR040131">
    <property type="entry name" value="MnmG_N"/>
</dbReference>
<dbReference type="NCBIfam" id="TIGR00136">
    <property type="entry name" value="mnmG_gidA"/>
    <property type="match status" value="1"/>
</dbReference>
<dbReference type="PANTHER" id="PTHR11806">
    <property type="entry name" value="GLUCOSE INHIBITED DIVISION PROTEIN A"/>
    <property type="match status" value="1"/>
</dbReference>
<dbReference type="PANTHER" id="PTHR11806:SF0">
    <property type="entry name" value="PROTEIN MTO1 HOMOLOG, MITOCHONDRIAL"/>
    <property type="match status" value="1"/>
</dbReference>
<dbReference type="Pfam" id="PF01134">
    <property type="entry name" value="GIDA"/>
    <property type="match status" value="1"/>
</dbReference>
<dbReference type="Pfam" id="PF21680">
    <property type="entry name" value="GIDA_C_1st"/>
    <property type="match status" value="1"/>
</dbReference>
<dbReference type="Pfam" id="PF13932">
    <property type="entry name" value="SAM_GIDA_C"/>
    <property type="match status" value="1"/>
</dbReference>
<dbReference type="SMART" id="SM01228">
    <property type="entry name" value="GIDA_assoc_3"/>
    <property type="match status" value="1"/>
</dbReference>
<dbReference type="SUPFAM" id="SSF51905">
    <property type="entry name" value="FAD/NAD(P)-binding domain"/>
    <property type="match status" value="1"/>
</dbReference>
<dbReference type="PROSITE" id="PS01280">
    <property type="entry name" value="GIDA_1"/>
    <property type="match status" value="1"/>
</dbReference>
<dbReference type="PROSITE" id="PS01281">
    <property type="entry name" value="GIDA_2"/>
    <property type="match status" value="1"/>
</dbReference>
<comment type="function">
    <text evidence="1">NAD-binding protein involved in the addition of a carboxymethylaminomethyl (cmnm) group at the wobble position (U34) of certain tRNAs, forming tRNA-cmnm(5)s(2)U34.</text>
</comment>
<comment type="cofactor">
    <cofactor evidence="1">
        <name>FAD</name>
        <dbReference type="ChEBI" id="CHEBI:57692"/>
    </cofactor>
</comment>
<comment type="subunit">
    <text evidence="1">Homodimer. Heterotetramer of two MnmE and two MnmG subunits.</text>
</comment>
<comment type="subcellular location">
    <subcellularLocation>
        <location evidence="1">Cytoplasm</location>
    </subcellularLocation>
</comment>
<comment type="similarity">
    <text evidence="1">Belongs to the MnmG family.</text>
</comment>
<name>MNMG_ECOHS</name>
<reference key="1">
    <citation type="journal article" date="2008" name="J. Bacteriol.">
        <title>The pangenome structure of Escherichia coli: comparative genomic analysis of E. coli commensal and pathogenic isolates.</title>
        <authorList>
            <person name="Rasko D.A."/>
            <person name="Rosovitz M.J."/>
            <person name="Myers G.S.A."/>
            <person name="Mongodin E.F."/>
            <person name="Fricke W.F."/>
            <person name="Gajer P."/>
            <person name="Crabtree J."/>
            <person name="Sebaihia M."/>
            <person name="Thomson N.R."/>
            <person name="Chaudhuri R."/>
            <person name="Henderson I.R."/>
            <person name="Sperandio V."/>
            <person name="Ravel J."/>
        </authorList>
    </citation>
    <scope>NUCLEOTIDE SEQUENCE [LARGE SCALE GENOMIC DNA]</scope>
    <source>
        <strain>HS</strain>
    </source>
</reference>